<proteinExistence type="inferred from homology"/>
<sequence length="294" mass="31618">MHPRFQTAFAQLADNLQSALAPILADHHFPAMLTAEQVSTLKNTAGLDEDALAFALLPLAAACARTDLSHFNVGAIARGVSGNWYFGANMEFLGATMQQTVHAEQSAISHAWLRGEKGLAAVTVNYTPCGHCRQFMNELNSGLDLRIHLPGRAPHTLRDYLPDAFGPKDLEIKTLLMDEQDHGFTLTGNTLTQAAITAANKSHMPYSHSPSGVALECKDGRIFTGSYAENAAFNPTLPPLQGALNLLSLNGYDYADIQRAILAEKGDAALIQWDATAATLKALGCHNIDRVLLG</sequence>
<gene>
    <name evidence="1" type="primary">cdd</name>
    <name type="ordered locus">STY2413</name>
    <name type="ordered locus">t0672</name>
</gene>
<accession>Q8Z5A8</accession>
<accession>Q7CB25</accession>
<protein>
    <recommendedName>
        <fullName evidence="1">Cytidine deaminase</fullName>
        <ecNumber evidence="1">3.5.4.5</ecNumber>
    </recommendedName>
    <alternativeName>
        <fullName evidence="1">Cytidine aminohydrolase</fullName>
        <shortName evidence="1">CDA</shortName>
    </alternativeName>
</protein>
<keyword id="KW-0378">Hydrolase</keyword>
<keyword id="KW-0479">Metal-binding</keyword>
<keyword id="KW-0862">Zinc</keyword>
<organism>
    <name type="scientific">Salmonella typhi</name>
    <dbReference type="NCBI Taxonomy" id="90370"/>
    <lineage>
        <taxon>Bacteria</taxon>
        <taxon>Pseudomonadati</taxon>
        <taxon>Pseudomonadota</taxon>
        <taxon>Gammaproteobacteria</taxon>
        <taxon>Enterobacterales</taxon>
        <taxon>Enterobacteriaceae</taxon>
        <taxon>Salmonella</taxon>
    </lineage>
</organism>
<evidence type="ECO:0000255" key="1">
    <source>
        <dbReference type="HAMAP-Rule" id="MF_01558"/>
    </source>
</evidence>
<evidence type="ECO:0000255" key="2">
    <source>
        <dbReference type="PROSITE-ProRule" id="PRU01083"/>
    </source>
</evidence>
<name>CDD_SALTI</name>
<reference key="1">
    <citation type="journal article" date="2001" name="Nature">
        <title>Complete genome sequence of a multiple drug resistant Salmonella enterica serovar Typhi CT18.</title>
        <authorList>
            <person name="Parkhill J."/>
            <person name="Dougan G."/>
            <person name="James K.D."/>
            <person name="Thomson N.R."/>
            <person name="Pickard D."/>
            <person name="Wain J."/>
            <person name="Churcher C.M."/>
            <person name="Mungall K.L."/>
            <person name="Bentley S.D."/>
            <person name="Holden M.T.G."/>
            <person name="Sebaihia M."/>
            <person name="Baker S."/>
            <person name="Basham D."/>
            <person name="Brooks K."/>
            <person name="Chillingworth T."/>
            <person name="Connerton P."/>
            <person name="Cronin A."/>
            <person name="Davis P."/>
            <person name="Davies R.M."/>
            <person name="Dowd L."/>
            <person name="White N."/>
            <person name="Farrar J."/>
            <person name="Feltwell T."/>
            <person name="Hamlin N."/>
            <person name="Haque A."/>
            <person name="Hien T.T."/>
            <person name="Holroyd S."/>
            <person name="Jagels K."/>
            <person name="Krogh A."/>
            <person name="Larsen T.S."/>
            <person name="Leather S."/>
            <person name="Moule S."/>
            <person name="O'Gaora P."/>
            <person name="Parry C."/>
            <person name="Quail M.A."/>
            <person name="Rutherford K.M."/>
            <person name="Simmonds M."/>
            <person name="Skelton J."/>
            <person name="Stevens K."/>
            <person name="Whitehead S."/>
            <person name="Barrell B.G."/>
        </authorList>
    </citation>
    <scope>NUCLEOTIDE SEQUENCE [LARGE SCALE GENOMIC DNA]</scope>
    <source>
        <strain>CT18</strain>
    </source>
</reference>
<reference key="2">
    <citation type="journal article" date="2003" name="J. Bacteriol.">
        <title>Comparative genomics of Salmonella enterica serovar Typhi strains Ty2 and CT18.</title>
        <authorList>
            <person name="Deng W."/>
            <person name="Liou S.-R."/>
            <person name="Plunkett G. III"/>
            <person name="Mayhew G.F."/>
            <person name="Rose D.J."/>
            <person name="Burland V."/>
            <person name="Kodoyianni V."/>
            <person name="Schwartz D.C."/>
            <person name="Blattner F.R."/>
        </authorList>
    </citation>
    <scope>NUCLEOTIDE SEQUENCE [LARGE SCALE GENOMIC DNA]</scope>
    <source>
        <strain>ATCC 700931 / Ty2</strain>
    </source>
</reference>
<comment type="function">
    <text evidence="1">This enzyme scavenges exogenous and endogenous cytidine and 2'-deoxycytidine for UMP synthesis.</text>
</comment>
<comment type="catalytic activity">
    <reaction evidence="1">
        <text>cytidine + H2O + H(+) = uridine + NH4(+)</text>
        <dbReference type="Rhea" id="RHEA:16069"/>
        <dbReference type="ChEBI" id="CHEBI:15377"/>
        <dbReference type="ChEBI" id="CHEBI:15378"/>
        <dbReference type="ChEBI" id="CHEBI:16704"/>
        <dbReference type="ChEBI" id="CHEBI:17562"/>
        <dbReference type="ChEBI" id="CHEBI:28938"/>
        <dbReference type="EC" id="3.5.4.5"/>
    </reaction>
</comment>
<comment type="catalytic activity">
    <reaction evidence="1">
        <text>2'-deoxycytidine + H2O + H(+) = 2'-deoxyuridine + NH4(+)</text>
        <dbReference type="Rhea" id="RHEA:13433"/>
        <dbReference type="ChEBI" id="CHEBI:15377"/>
        <dbReference type="ChEBI" id="CHEBI:15378"/>
        <dbReference type="ChEBI" id="CHEBI:15698"/>
        <dbReference type="ChEBI" id="CHEBI:16450"/>
        <dbReference type="ChEBI" id="CHEBI:28938"/>
        <dbReference type="EC" id="3.5.4.5"/>
    </reaction>
</comment>
<comment type="cofactor">
    <cofactor evidence="1">
        <name>Zn(2+)</name>
        <dbReference type="ChEBI" id="CHEBI:29105"/>
    </cofactor>
    <text evidence="1">Binds 1 zinc ion.</text>
</comment>
<comment type="subunit">
    <text evidence="1">Homodimer.</text>
</comment>
<comment type="similarity">
    <text evidence="1">Belongs to the cytidine and deoxycytidylate deaminase family.</text>
</comment>
<dbReference type="EC" id="3.5.4.5" evidence="1"/>
<dbReference type="EMBL" id="AL513382">
    <property type="protein sequence ID" value="CAD02563.1"/>
    <property type="molecule type" value="Genomic_DNA"/>
</dbReference>
<dbReference type="EMBL" id="AE014613">
    <property type="protein sequence ID" value="AAO68370.1"/>
    <property type="molecule type" value="Genomic_DNA"/>
</dbReference>
<dbReference type="RefSeq" id="NP_456742.1">
    <property type="nucleotide sequence ID" value="NC_003198.1"/>
</dbReference>
<dbReference type="RefSeq" id="WP_000553529.1">
    <property type="nucleotide sequence ID" value="NZ_WSUR01000002.1"/>
</dbReference>
<dbReference type="SMR" id="Q8Z5A8"/>
<dbReference type="STRING" id="220341.gene:17586318"/>
<dbReference type="KEGG" id="stt:t0672"/>
<dbReference type="KEGG" id="sty:STY2413"/>
<dbReference type="PATRIC" id="fig|220341.7.peg.2439"/>
<dbReference type="eggNOG" id="COG0295">
    <property type="taxonomic scope" value="Bacteria"/>
</dbReference>
<dbReference type="HOGENOM" id="CLU_052424_0_0_6"/>
<dbReference type="OMA" id="NYSPCGH"/>
<dbReference type="OrthoDB" id="9795347at2"/>
<dbReference type="Proteomes" id="UP000000541">
    <property type="component" value="Chromosome"/>
</dbReference>
<dbReference type="Proteomes" id="UP000002670">
    <property type="component" value="Chromosome"/>
</dbReference>
<dbReference type="GO" id="GO:0005829">
    <property type="term" value="C:cytosol"/>
    <property type="evidence" value="ECO:0007669"/>
    <property type="project" value="TreeGrafter"/>
</dbReference>
<dbReference type="GO" id="GO:0004126">
    <property type="term" value="F:cytidine deaminase activity"/>
    <property type="evidence" value="ECO:0007669"/>
    <property type="project" value="UniProtKB-UniRule"/>
</dbReference>
<dbReference type="GO" id="GO:0042802">
    <property type="term" value="F:identical protein binding"/>
    <property type="evidence" value="ECO:0007669"/>
    <property type="project" value="UniProtKB-ARBA"/>
</dbReference>
<dbReference type="GO" id="GO:0008270">
    <property type="term" value="F:zinc ion binding"/>
    <property type="evidence" value="ECO:0007669"/>
    <property type="project" value="UniProtKB-UniRule"/>
</dbReference>
<dbReference type="GO" id="GO:0009972">
    <property type="term" value="P:cytidine deamination"/>
    <property type="evidence" value="ECO:0007669"/>
    <property type="project" value="InterPro"/>
</dbReference>
<dbReference type="CDD" id="cd01283">
    <property type="entry name" value="cytidine_deaminase"/>
    <property type="match status" value="2"/>
</dbReference>
<dbReference type="FunFam" id="3.40.140.10:FF:000006">
    <property type="entry name" value="Cytidine deaminase"/>
    <property type="match status" value="1"/>
</dbReference>
<dbReference type="FunFam" id="3.40.140.10:FF:000007">
    <property type="entry name" value="Cytidine deaminase"/>
    <property type="match status" value="1"/>
</dbReference>
<dbReference type="Gene3D" id="3.40.140.10">
    <property type="entry name" value="Cytidine Deaminase, domain 2"/>
    <property type="match status" value="2"/>
</dbReference>
<dbReference type="HAMAP" id="MF_01558">
    <property type="entry name" value="Cyt_deam"/>
    <property type="match status" value="1"/>
</dbReference>
<dbReference type="InterPro" id="IPR016192">
    <property type="entry name" value="APOBEC/CMP_deaminase_Zn-bd"/>
</dbReference>
<dbReference type="InterPro" id="IPR002125">
    <property type="entry name" value="CMP_dCMP_dom"/>
</dbReference>
<dbReference type="InterPro" id="IPR013171">
    <property type="entry name" value="Cyd/dCyd_deaminase_Zn-bd"/>
</dbReference>
<dbReference type="InterPro" id="IPR050202">
    <property type="entry name" value="Cyt/Deoxycyt_deaminase"/>
</dbReference>
<dbReference type="InterPro" id="IPR006263">
    <property type="entry name" value="Cyt_deam_dimer"/>
</dbReference>
<dbReference type="InterPro" id="IPR016193">
    <property type="entry name" value="Cytidine_deaminase-like"/>
</dbReference>
<dbReference type="InterPro" id="IPR020797">
    <property type="entry name" value="Cytidine_deaminase_bacteria"/>
</dbReference>
<dbReference type="NCBIfam" id="TIGR01355">
    <property type="entry name" value="cyt_deam_dimer"/>
    <property type="match status" value="1"/>
</dbReference>
<dbReference type="NCBIfam" id="NF006537">
    <property type="entry name" value="PRK09027.1"/>
    <property type="match status" value="1"/>
</dbReference>
<dbReference type="PANTHER" id="PTHR11644">
    <property type="entry name" value="CYTIDINE DEAMINASE"/>
    <property type="match status" value="1"/>
</dbReference>
<dbReference type="PANTHER" id="PTHR11644:SF2">
    <property type="entry name" value="CYTIDINE DEAMINASE"/>
    <property type="match status" value="1"/>
</dbReference>
<dbReference type="Pfam" id="PF00383">
    <property type="entry name" value="dCMP_cyt_deam_1"/>
    <property type="match status" value="1"/>
</dbReference>
<dbReference type="Pfam" id="PF08211">
    <property type="entry name" value="dCMP_cyt_deam_2"/>
    <property type="match status" value="1"/>
</dbReference>
<dbReference type="PIRSF" id="PIRSF006334">
    <property type="entry name" value="Cdd_plus_pseudo"/>
    <property type="match status" value="1"/>
</dbReference>
<dbReference type="SUPFAM" id="SSF53927">
    <property type="entry name" value="Cytidine deaminase-like"/>
    <property type="match status" value="2"/>
</dbReference>
<dbReference type="PROSITE" id="PS00903">
    <property type="entry name" value="CYT_DCMP_DEAMINASES_1"/>
    <property type="match status" value="1"/>
</dbReference>
<dbReference type="PROSITE" id="PS51747">
    <property type="entry name" value="CYT_DCMP_DEAMINASES_2"/>
    <property type="match status" value="2"/>
</dbReference>
<feature type="chain" id="PRO_0000171662" description="Cytidine deaminase">
    <location>
        <begin position="1"/>
        <end position="294"/>
    </location>
</feature>
<feature type="domain" description="CMP/dCMP-type deaminase 1" evidence="2">
    <location>
        <begin position="48"/>
        <end position="168"/>
    </location>
</feature>
<feature type="domain" description="CMP/dCMP-type deaminase 2" evidence="2">
    <location>
        <begin position="186"/>
        <end position="294"/>
    </location>
</feature>
<feature type="active site" description="Proton donor" evidence="1">
    <location>
        <position position="104"/>
    </location>
</feature>
<feature type="binding site" evidence="1">
    <location>
        <begin position="89"/>
        <end position="91"/>
    </location>
    <ligand>
        <name>substrate</name>
    </ligand>
</feature>
<feature type="binding site" evidence="1">
    <location>
        <position position="102"/>
    </location>
    <ligand>
        <name>Zn(2+)</name>
        <dbReference type="ChEBI" id="CHEBI:29105"/>
        <note>catalytic</note>
    </ligand>
</feature>
<feature type="binding site" evidence="1">
    <location>
        <position position="129"/>
    </location>
    <ligand>
        <name>Zn(2+)</name>
        <dbReference type="ChEBI" id="CHEBI:29105"/>
        <note>catalytic</note>
    </ligand>
</feature>
<feature type="binding site" evidence="1">
    <location>
        <position position="132"/>
    </location>
    <ligand>
        <name>Zn(2+)</name>
        <dbReference type="ChEBI" id="CHEBI:29105"/>
        <note>catalytic</note>
    </ligand>
</feature>